<keyword id="KW-0193">Cuticle</keyword>
<keyword id="KW-0903">Direct protein sequencing</keyword>
<feature type="chain" id="PRO_0000196146" description="Adult-specific rigid cuticular protein 12.4">
    <location>
        <begin position="1"/>
        <end position="126"/>
    </location>
</feature>
<feature type="domain" description="Chitin-binding type R&amp;R" evidence="1">
    <location>
        <begin position="9"/>
        <end position="87"/>
    </location>
</feature>
<name>CU24_ARADI</name>
<accession>P80516</accession>
<comment type="function">
    <text>Component of the rigid cuticle of the spider.</text>
</comment>
<comment type="mass spectrometry"/>
<reference key="1">
    <citation type="journal article" date="1996" name="Insect Biochem. Mol. Biol.">
        <title>Purification and characterization of five cuticular proteins from the spider Araneus diadematus.</title>
        <authorList>
            <person name="Norup T."/>
            <person name="Berg T."/>
            <person name="Stenholm H."/>
            <person name="Andersen S.O."/>
            <person name="Hoejrup P."/>
        </authorList>
    </citation>
    <scope>PROTEIN SEQUENCE</scope>
    <scope>MASS SPECTROMETRY</scope>
    <source>
        <tissue>Cuticle</tissue>
    </source>
</reference>
<protein>
    <recommendedName>
        <fullName>Adult-specific rigid cuticular protein 12.4</fullName>
        <shortName>ACP 12.4</shortName>
    </recommendedName>
</protein>
<dbReference type="GO" id="GO:0062129">
    <property type="term" value="C:chitin-based extracellular matrix"/>
    <property type="evidence" value="ECO:0007669"/>
    <property type="project" value="TreeGrafter"/>
</dbReference>
<dbReference type="GO" id="GO:0008010">
    <property type="term" value="F:structural constituent of chitin-based larval cuticle"/>
    <property type="evidence" value="ECO:0007669"/>
    <property type="project" value="TreeGrafter"/>
</dbReference>
<dbReference type="InterPro" id="IPR031311">
    <property type="entry name" value="CHIT_BIND_RR_consensus"/>
</dbReference>
<dbReference type="InterPro" id="IPR050468">
    <property type="entry name" value="Cuticle_Struct_Prot"/>
</dbReference>
<dbReference type="InterPro" id="IPR000618">
    <property type="entry name" value="Insect_cuticle"/>
</dbReference>
<dbReference type="PANTHER" id="PTHR10380">
    <property type="entry name" value="CUTICLE PROTEIN"/>
    <property type="match status" value="1"/>
</dbReference>
<dbReference type="Pfam" id="PF00379">
    <property type="entry name" value="Chitin_bind_4"/>
    <property type="match status" value="1"/>
</dbReference>
<dbReference type="PRINTS" id="PR00947">
    <property type="entry name" value="CUTICLE"/>
</dbReference>
<dbReference type="PROSITE" id="PS00233">
    <property type="entry name" value="CHIT_BIND_RR_1"/>
    <property type="match status" value="1"/>
</dbReference>
<dbReference type="PROSITE" id="PS51155">
    <property type="entry name" value="CHIT_BIND_RR_2"/>
    <property type="match status" value="1"/>
</dbReference>
<sequence>ADMGMTLAGGAYNFGFNTGDATGHSRVESGTAGSAVGSYSYIDANGDRRTVQYSAGPDGFKATGDVGVDRKTAAAAAAMAALAPKAPPAPAPAAPVAPVVPGAWGYWGAPGYSVILPGLAGYAARW</sequence>
<organism>
    <name type="scientific">Araneus diadematus</name>
    <name type="common">European garden spider</name>
    <name type="synonym">Cross spider</name>
    <dbReference type="NCBI Taxonomy" id="45920"/>
    <lineage>
        <taxon>Eukaryota</taxon>
        <taxon>Metazoa</taxon>
        <taxon>Ecdysozoa</taxon>
        <taxon>Arthropoda</taxon>
        <taxon>Chelicerata</taxon>
        <taxon>Arachnida</taxon>
        <taxon>Araneae</taxon>
        <taxon>Araneomorphae</taxon>
        <taxon>Entelegynae</taxon>
        <taxon>Araneoidea</taxon>
        <taxon>Araneidae</taxon>
        <taxon>Araneus</taxon>
    </lineage>
</organism>
<evidence type="ECO:0000255" key="1">
    <source>
        <dbReference type="PROSITE-ProRule" id="PRU00497"/>
    </source>
</evidence>
<evidence type="ECO:0000269" key="2">
    <source>
    </source>
</evidence>
<proteinExistence type="evidence at protein level"/>